<evidence type="ECO:0000255" key="1">
    <source>
        <dbReference type="HAMAP-Rule" id="MF_00578"/>
    </source>
</evidence>
<organism>
    <name type="scientific">Clostridium acetobutylicum (strain ATCC 824 / DSM 792 / JCM 1419 / IAM 19013 / LMG 5710 / NBRC 13948 / NRRL B-527 / VKM B-1787 / 2291 / W)</name>
    <dbReference type="NCBI Taxonomy" id="272562"/>
    <lineage>
        <taxon>Bacteria</taxon>
        <taxon>Bacillati</taxon>
        <taxon>Bacillota</taxon>
        <taxon>Clostridia</taxon>
        <taxon>Eubacteriales</taxon>
        <taxon>Clostridiaceae</taxon>
        <taxon>Clostridium</taxon>
    </lineage>
</organism>
<name>GSH1_CLOAB</name>
<protein>
    <recommendedName>
        <fullName evidence="1">Glutamate--cysteine ligase</fullName>
        <ecNumber evidence="1">6.3.2.2</ecNumber>
    </recommendedName>
    <alternativeName>
        <fullName evidence="1">Gamma-ECS</fullName>
        <shortName evidence="1">GCS</shortName>
    </alternativeName>
    <alternativeName>
        <fullName evidence="1">Gamma-glutamylcysteine synthetase</fullName>
    </alternativeName>
</protein>
<proteinExistence type="inferred from homology"/>
<comment type="catalytic activity">
    <reaction evidence="1">
        <text>L-cysteine + L-glutamate + ATP = gamma-L-glutamyl-L-cysteine + ADP + phosphate + H(+)</text>
        <dbReference type="Rhea" id="RHEA:13285"/>
        <dbReference type="ChEBI" id="CHEBI:15378"/>
        <dbReference type="ChEBI" id="CHEBI:29985"/>
        <dbReference type="ChEBI" id="CHEBI:30616"/>
        <dbReference type="ChEBI" id="CHEBI:35235"/>
        <dbReference type="ChEBI" id="CHEBI:43474"/>
        <dbReference type="ChEBI" id="CHEBI:58173"/>
        <dbReference type="ChEBI" id="CHEBI:456216"/>
        <dbReference type="EC" id="6.3.2.2"/>
    </reaction>
</comment>
<comment type="pathway">
    <text evidence="1">Sulfur metabolism; glutathione biosynthesis; glutathione from L-cysteine and L-glutamate: step 1/2.</text>
</comment>
<comment type="similarity">
    <text evidence="1">Belongs to the glutamate--cysteine ligase type 1 family. Type 1 subfamily.</text>
</comment>
<gene>
    <name evidence="1" type="primary">gshA</name>
    <name type="ordered locus">CA_C1539</name>
</gene>
<sequence length="481" mass="56715">MHWSFPEMIRLFSDEYRSSMLSEGNFGVERESQRVNYSGDLALTPHPSVFGDKFENPRITTDFSESQIEMITPPLKSAEEVYKALNDINNEVKNALKGELLWPLSMPPRLPKEEDIPVAQFPDTEDGRQKQIYRNGLALRYGKKMQMISGIHYNFSFSDKMIDFIYRQLRIEKTKRQFIDEMYFSLTRNFLRYHWILIYLFGASPICDSTYNSVIFKELEKIEKCCPHCAGKIKNFNRYATSLRVSRFGYSDTDEKKYTVYFNSLREYETKIKKMMETESNKYSKLGIYKDGVQIQLNGNLLQSESEFYAPIRFKRNIKKGETQLTALVNRGVEYIEIRILDVNPFDKVGISVEQMNFLQVFNVFCLFEESKSIDEEQMERINTNHQLAALLGRNEDLMLYKYNDDSRIPLKNFGDEIFEKLRIVAKLMDKDNVEKKYSESVESEYKKLHNIELLPSERICREMDNDNRSYIQFGMEYAEA</sequence>
<accession>Q97IV1</accession>
<reference key="1">
    <citation type="journal article" date="2001" name="J. Bacteriol.">
        <title>Genome sequence and comparative analysis of the solvent-producing bacterium Clostridium acetobutylicum.</title>
        <authorList>
            <person name="Noelling J."/>
            <person name="Breton G."/>
            <person name="Omelchenko M.V."/>
            <person name="Makarova K.S."/>
            <person name="Zeng Q."/>
            <person name="Gibson R."/>
            <person name="Lee H.M."/>
            <person name="Dubois J."/>
            <person name="Qiu D."/>
            <person name="Hitti J."/>
            <person name="Wolf Y.I."/>
            <person name="Tatusov R.L."/>
            <person name="Sabathe F."/>
            <person name="Doucette-Stamm L.A."/>
            <person name="Soucaille P."/>
            <person name="Daly M.J."/>
            <person name="Bennett G.N."/>
            <person name="Koonin E.V."/>
            <person name="Smith D.R."/>
        </authorList>
    </citation>
    <scope>NUCLEOTIDE SEQUENCE [LARGE SCALE GENOMIC DNA]</scope>
    <source>
        <strain>ATCC 824 / DSM 792 / JCM 1419 / IAM 19013 / LMG 5710 / NBRC 13948 / NRRL B-527 / VKM B-1787 / 2291 / W</strain>
    </source>
</reference>
<dbReference type="EC" id="6.3.2.2" evidence="1"/>
<dbReference type="EMBL" id="AE001437">
    <property type="protein sequence ID" value="AAK79506.1"/>
    <property type="molecule type" value="Genomic_DNA"/>
</dbReference>
<dbReference type="PIR" id="G97089">
    <property type="entry name" value="G97089"/>
</dbReference>
<dbReference type="RefSeq" id="NP_348166.1">
    <property type="nucleotide sequence ID" value="NC_003030.1"/>
</dbReference>
<dbReference type="RefSeq" id="WP_010964847.1">
    <property type="nucleotide sequence ID" value="NC_003030.1"/>
</dbReference>
<dbReference type="SMR" id="Q97IV1"/>
<dbReference type="STRING" id="272562.CA_C1539"/>
<dbReference type="GeneID" id="44998038"/>
<dbReference type="KEGG" id="cac:CA_C1539"/>
<dbReference type="PATRIC" id="fig|272562.8.peg.1741"/>
<dbReference type="eggNOG" id="COG2918">
    <property type="taxonomic scope" value="Bacteria"/>
</dbReference>
<dbReference type="HOGENOM" id="CLU_020728_3_0_9"/>
<dbReference type="OrthoDB" id="9803907at2"/>
<dbReference type="UniPathway" id="UPA00142">
    <property type="reaction ID" value="UER00209"/>
</dbReference>
<dbReference type="Proteomes" id="UP000000814">
    <property type="component" value="Chromosome"/>
</dbReference>
<dbReference type="GO" id="GO:0005829">
    <property type="term" value="C:cytosol"/>
    <property type="evidence" value="ECO:0007669"/>
    <property type="project" value="TreeGrafter"/>
</dbReference>
<dbReference type="GO" id="GO:0005524">
    <property type="term" value="F:ATP binding"/>
    <property type="evidence" value="ECO:0007669"/>
    <property type="project" value="UniProtKB-KW"/>
</dbReference>
<dbReference type="GO" id="GO:0004357">
    <property type="term" value="F:glutamate-cysteine ligase activity"/>
    <property type="evidence" value="ECO:0007669"/>
    <property type="project" value="UniProtKB-UniRule"/>
</dbReference>
<dbReference type="GO" id="GO:0046872">
    <property type="term" value="F:metal ion binding"/>
    <property type="evidence" value="ECO:0007669"/>
    <property type="project" value="TreeGrafter"/>
</dbReference>
<dbReference type="GO" id="GO:0006750">
    <property type="term" value="P:glutathione biosynthetic process"/>
    <property type="evidence" value="ECO:0007669"/>
    <property type="project" value="UniProtKB-UniRule"/>
</dbReference>
<dbReference type="Gene3D" id="3.30.590.20">
    <property type="match status" value="1"/>
</dbReference>
<dbReference type="HAMAP" id="MF_00578">
    <property type="entry name" value="Glu_cys_ligase"/>
    <property type="match status" value="1"/>
</dbReference>
<dbReference type="InterPro" id="IPR014746">
    <property type="entry name" value="Gln_synth/guanido_kin_cat_dom"/>
</dbReference>
<dbReference type="InterPro" id="IPR007370">
    <property type="entry name" value="Glu_cys_ligase"/>
</dbReference>
<dbReference type="InterPro" id="IPR006334">
    <property type="entry name" value="Glut_cys_ligase"/>
</dbReference>
<dbReference type="NCBIfam" id="TIGR01434">
    <property type="entry name" value="glu_cys_ligase"/>
    <property type="match status" value="1"/>
</dbReference>
<dbReference type="PANTHER" id="PTHR38761">
    <property type="entry name" value="GLUTAMATE--CYSTEINE LIGASE"/>
    <property type="match status" value="1"/>
</dbReference>
<dbReference type="PANTHER" id="PTHR38761:SF1">
    <property type="entry name" value="GLUTAMATE--CYSTEINE LIGASE"/>
    <property type="match status" value="1"/>
</dbReference>
<dbReference type="Pfam" id="PF04262">
    <property type="entry name" value="Glu_cys_ligase"/>
    <property type="match status" value="1"/>
</dbReference>
<dbReference type="SUPFAM" id="SSF55931">
    <property type="entry name" value="Glutamine synthetase/guanido kinase"/>
    <property type="match status" value="1"/>
</dbReference>
<feature type="chain" id="PRO_0000192523" description="Glutamate--cysteine ligase">
    <location>
        <begin position="1"/>
        <end position="481"/>
    </location>
</feature>
<keyword id="KW-0067">ATP-binding</keyword>
<keyword id="KW-0317">Glutathione biosynthesis</keyword>
<keyword id="KW-0436">Ligase</keyword>
<keyword id="KW-0547">Nucleotide-binding</keyword>
<keyword id="KW-1185">Reference proteome</keyword>